<proteinExistence type="inferred from homology"/>
<name>SEC11_COCPS</name>
<protein>
    <recommendedName>
        <fullName>Signal peptidase complex catalytic subunit SEC11</fullName>
        <ecNumber evidence="1">3.4.21.89</ecNumber>
    </recommendedName>
    <alternativeName>
        <fullName>Signal peptidase I</fullName>
    </alternativeName>
</protein>
<comment type="function">
    <text evidence="1 2">Catalytic component of the signal peptidase complex (SPC) which catalyzes the cleavage of N-terminal signal sequences from nascent proteins as they are translocated into the lumen of the endoplasmic reticulum (By similarity). Specifically cleaves N-terminal signal peptides that contain a hydrophobic alpha-helix (h-region) shorter than 18-20 amino acids (By similarity).</text>
</comment>
<comment type="catalytic activity">
    <reaction evidence="1">
        <text>Cleavage of hydrophobic, N-terminal signal or leader sequences from secreted and periplasmic proteins.</text>
        <dbReference type="EC" id="3.4.21.89"/>
    </reaction>
</comment>
<comment type="subunit">
    <text evidence="1 2">Component of the signal peptidase complex (SPC) composed of a catalytic subunit SEC11 and three accessory subunits SPC1, SPC2 and SPC3 (By similarity). The complex induces a local thinning of the ER membrane which is used to measure the length of the signal peptide (SP) h-region of protein substrates. This ensures the selectivity of the complex towards h-regions shorter than 18-20 amino acids (By similarity). SPC associates with the translocon complex (By similarity).</text>
</comment>
<comment type="subcellular location">
    <subcellularLocation>
        <location evidence="1">Endoplasmic reticulum membrane</location>
        <topology evidence="1">Single-pass type II membrane protein</topology>
    </subcellularLocation>
</comment>
<comment type="domain">
    <text evidence="2">The C-terminal short (CTS) helix is essential for catalytic activity. It may be accommodated as a transmembrane helix in the thinned membrane environment of the complex, similarly to the signal peptide in the complex substrates.</text>
</comment>
<comment type="similarity">
    <text evidence="4">Belongs to the peptidase S26B family.</text>
</comment>
<gene>
    <name type="primary">SEC11</name>
    <name type="ORF">CPSG_02492</name>
</gene>
<sequence length="210" mass="23125">MLAGLSPHLSNLRRSLTQVLNFALVLSTAFMMWKGLSIYTNSSSPIVVVLSGSMEPAFQRGDLLFLWNRSPRAEVGEIVVYNVRGKDIPIVHRVVRAFGDDEKSPKETNGQKKKKVMSSGKKDSIAAGALHSDSALVSHRILTKGDNNIADDTELYAQGQDYLDRKLDLVGSVRGYIPAVGYVTIMLSEHPWLKTVLLGIMGAMVILQRE</sequence>
<feature type="chain" id="PRO_0000412326" description="Signal peptidase complex catalytic subunit SEC11">
    <location>
        <begin position="1"/>
        <end position="210"/>
    </location>
</feature>
<feature type="topological domain" description="Cytoplasmic" evidence="3">
    <location>
        <begin position="1"/>
        <end position="21"/>
    </location>
</feature>
<feature type="transmembrane region" description="Helical; Signal-anchor for type II membrane protein" evidence="3">
    <location>
        <begin position="22"/>
        <end position="38"/>
    </location>
</feature>
<feature type="topological domain" description="Lumenal" evidence="3">
    <location>
        <begin position="39"/>
        <end position="210"/>
    </location>
</feature>
<feature type="region of interest" description="C-terminal short (CTS) helix" evidence="2">
    <location>
        <begin position="196"/>
        <end position="207"/>
    </location>
</feature>
<feature type="active site" description="Charge relay system" evidence="1">
    <location>
        <position position="53"/>
    </location>
</feature>
<feature type="active site" description="Charge relay system" evidence="1">
    <location>
        <position position="92"/>
    </location>
</feature>
<feature type="active site" description="Charge relay system" evidence="1">
    <location>
        <position position="152"/>
    </location>
</feature>
<feature type="glycosylation site" description="N-linked (GlcNAc...) asparagine" evidence="3">
    <location>
        <position position="41"/>
    </location>
</feature>
<evidence type="ECO:0000250" key="1">
    <source>
        <dbReference type="UniProtKB" id="P15367"/>
    </source>
</evidence>
<evidence type="ECO:0000250" key="2">
    <source>
        <dbReference type="UniProtKB" id="P67812"/>
    </source>
</evidence>
<evidence type="ECO:0000255" key="3"/>
<evidence type="ECO:0000305" key="4"/>
<keyword id="KW-0256">Endoplasmic reticulum</keyword>
<keyword id="KW-0325">Glycoprotein</keyword>
<keyword id="KW-0378">Hydrolase</keyword>
<keyword id="KW-0472">Membrane</keyword>
<keyword id="KW-0645">Protease</keyword>
<keyword id="KW-1185">Reference proteome</keyword>
<keyword id="KW-0735">Signal-anchor</keyword>
<keyword id="KW-0812">Transmembrane</keyword>
<keyword id="KW-1133">Transmembrane helix</keyword>
<dbReference type="EC" id="3.4.21.89" evidence="1"/>
<dbReference type="EMBL" id="GL636488">
    <property type="protein sequence ID" value="EFW20649.1"/>
    <property type="molecule type" value="Genomic_DNA"/>
</dbReference>
<dbReference type="RefSeq" id="XP_003068740.2">
    <property type="nucleotide sequence ID" value="XM_003068694.2"/>
</dbReference>
<dbReference type="SMR" id="E9CXH2"/>
<dbReference type="STRING" id="443226.E9CXH2"/>
<dbReference type="GlyCosmos" id="E9CXH2">
    <property type="glycosylation" value="1 site, No reported glycans"/>
</dbReference>
<dbReference type="GeneID" id="9694223"/>
<dbReference type="VEuPathDB" id="FungiDB:CPSG_02492"/>
<dbReference type="VEuPathDB" id="FungiDB:D8B26_003014"/>
<dbReference type="eggNOG" id="KOG3342">
    <property type="taxonomic scope" value="Eukaryota"/>
</dbReference>
<dbReference type="HOGENOM" id="CLU_089996_0_0_1"/>
<dbReference type="OMA" id="ILMNEYP"/>
<dbReference type="OrthoDB" id="30755at33183"/>
<dbReference type="Proteomes" id="UP000002497">
    <property type="component" value="Unassembled WGS sequence"/>
</dbReference>
<dbReference type="GO" id="GO:0005787">
    <property type="term" value="C:signal peptidase complex"/>
    <property type="evidence" value="ECO:0007669"/>
    <property type="project" value="EnsemblFungi"/>
</dbReference>
<dbReference type="GO" id="GO:0004252">
    <property type="term" value="F:serine-type endopeptidase activity"/>
    <property type="evidence" value="ECO:0007669"/>
    <property type="project" value="UniProtKB-EC"/>
</dbReference>
<dbReference type="GO" id="GO:0045047">
    <property type="term" value="P:protein targeting to ER"/>
    <property type="evidence" value="ECO:0007669"/>
    <property type="project" value="EnsemblFungi"/>
</dbReference>
<dbReference type="GO" id="GO:0006465">
    <property type="term" value="P:signal peptide processing"/>
    <property type="evidence" value="ECO:0007669"/>
    <property type="project" value="EnsemblFungi"/>
</dbReference>
<dbReference type="CDD" id="cd06530">
    <property type="entry name" value="S26_SPase_I"/>
    <property type="match status" value="1"/>
</dbReference>
<dbReference type="InterPro" id="IPR036286">
    <property type="entry name" value="LexA/Signal_pep-like_sf"/>
</dbReference>
<dbReference type="InterPro" id="IPR019756">
    <property type="entry name" value="Pept_S26A_signal_pept_1_Ser-AS"/>
</dbReference>
<dbReference type="InterPro" id="IPR019533">
    <property type="entry name" value="Peptidase_S26"/>
</dbReference>
<dbReference type="InterPro" id="IPR001733">
    <property type="entry name" value="Peptidase_S26B"/>
</dbReference>
<dbReference type="NCBIfam" id="TIGR02228">
    <property type="entry name" value="sigpep_I_arch"/>
    <property type="match status" value="1"/>
</dbReference>
<dbReference type="PANTHER" id="PTHR10806">
    <property type="entry name" value="SIGNAL PEPTIDASE COMPLEX CATALYTIC SUBUNIT SEC11"/>
    <property type="match status" value="1"/>
</dbReference>
<dbReference type="PANTHER" id="PTHR10806:SF6">
    <property type="entry name" value="SIGNAL PEPTIDASE COMPLEX CATALYTIC SUBUNIT SEC11"/>
    <property type="match status" value="1"/>
</dbReference>
<dbReference type="SUPFAM" id="SSF51306">
    <property type="entry name" value="LexA/Signal peptidase"/>
    <property type="match status" value="1"/>
</dbReference>
<dbReference type="PROSITE" id="PS00501">
    <property type="entry name" value="SPASE_I_1"/>
    <property type="match status" value="1"/>
</dbReference>
<organism>
    <name type="scientific">Coccidioides posadasii (strain RMSCC 757 / Silveira)</name>
    <name type="common">Valley fever fungus</name>
    <dbReference type="NCBI Taxonomy" id="443226"/>
    <lineage>
        <taxon>Eukaryota</taxon>
        <taxon>Fungi</taxon>
        <taxon>Dikarya</taxon>
        <taxon>Ascomycota</taxon>
        <taxon>Pezizomycotina</taxon>
        <taxon>Eurotiomycetes</taxon>
        <taxon>Eurotiomycetidae</taxon>
        <taxon>Onygenales</taxon>
        <taxon>Onygenaceae</taxon>
        <taxon>Coccidioides</taxon>
    </lineage>
</organism>
<reference key="1">
    <citation type="submission" date="2010-03" db="EMBL/GenBank/DDBJ databases">
        <title>The genome sequence of Coccidioides posadasii strain Silveira.</title>
        <authorList>
            <consortium name="The Broad Institute Genome Sequencing Center for Infectious Disease"/>
            <person name="Neafsey D."/>
            <person name="Orbach M."/>
            <person name="Henn M.R."/>
            <person name="Cole G.T."/>
            <person name="Galgiani J."/>
            <person name="Gardner M.J."/>
            <person name="Kirkland T.N."/>
            <person name="Taylor J.W."/>
            <person name="Young S.K."/>
            <person name="Zeng Q."/>
            <person name="Koehrsen M."/>
            <person name="Alvarado L."/>
            <person name="Berlin A."/>
            <person name="Borenstein D."/>
            <person name="Chapman S.B."/>
            <person name="Chen Z."/>
            <person name="Engels R."/>
            <person name="Freedman E."/>
            <person name="Gellesch M."/>
            <person name="Goldberg J."/>
            <person name="Griggs A."/>
            <person name="Gujja S."/>
            <person name="Heilman E."/>
            <person name="Heiman D."/>
            <person name="Howarth C."/>
            <person name="Jen D."/>
            <person name="Larson L."/>
            <person name="Mehta T."/>
            <person name="Neiman D."/>
            <person name="Park D."/>
            <person name="Pearson M."/>
            <person name="Richards J."/>
            <person name="Roberts A."/>
            <person name="Saif S."/>
            <person name="Shea T."/>
            <person name="Shenoy N."/>
            <person name="Sisk P."/>
            <person name="Stolte C."/>
            <person name="Sykes S."/>
            <person name="Walk T."/>
            <person name="White J."/>
            <person name="Yandava C."/>
            <person name="Haas B."/>
            <person name="Nusbaum C."/>
            <person name="Birren B."/>
        </authorList>
    </citation>
    <scope>NUCLEOTIDE SEQUENCE [LARGE SCALE GENOMIC DNA]</scope>
    <source>
        <strain>RMSCC 757 / Silveira</strain>
    </source>
</reference>
<accession>E9CXH2</accession>